<comment type="function">
    <text evidence="1">Associates with the EF-Tu.GDP complex and induces the exchange of GDP to GTP. It remains bound to the aminoacyl-tRNA.EF-Tu.GTP complex up to the GTP hydrolysis stage on the ribosome.</text>
</comment>
<comment type="subcellular location">
    <subcellularLocation>
        <location evidence="1">Cytoplasm</location>
    </subcellularLocation>
</comment>
<comment type="similarity">
    <text evidence="1">Belongs to the EF-Ts family.</text>
</comment>
<name>EFTS_CORK4</name>
<gene>
    <name evidence="1" type="primary">tsf</name>
    <name type="ordered locus">ckrop_1168</name>
</gene>
<proteinExistence type="inferred from homology"/>
<feature type="chain" id="PRO_1000202234" description="Elongation factor Ts">
    <location>
        <begin position="1"/>
        <end position="275"/>
    </location>
</feature>
<feature type="region of interest" description="Involved in Mg(2+) ion dislocation from EF-Tu" evidence="1">
    <location>
        <begin position="76"/>
        <end position="79"/>
    </location>
</feature>
<organism>
    <name type="scientific">Corynebacterium kroppenstedtii (strain DSM 44385 / JCM 11950 / CIP 105744 / CCUG 35717)</name>
    <dbReference type="NCBI Taxonomy" id="645127"/>
    <lineage>
        <taxon>Bacteria</taxon>
        <taxon>Bacillati</taxon>
        <taxon>Actinomycetota</taxon>
        <taxon>Actinomycetes</taxon>
        <taxon>Mycobacteriales</taxon>
        <taxon>Corynebacteriaceae</taxon>
        <taxon>Corynebacterium</taxon>
    </lineage>
</organism>
<reference key="1">
    <citation type="journal article" date="2008" name="J. Biotechnol.">
        <title>Ultrafast pyrosequencing of Corynebacterium kroppenstedtii DSM44385 revealed insights into the physiology of a lipophilic corynebacterium that lacks mycolic acids.</title>
        <authorList>
            <person name="Tauch A."/>
            <person name="Schneider J."/>
            <person name="Szczepanowski R."/>
            <person name="Tilker A."/>
            <person name="Viehoever P."/>
            <person name="Gartemann K.-H."/>
            <person name="Arnold W."/>
            <person name="Blom J."/>
            <person name="Brinkrolf K."/>
            <person name="Brune I."/>
            <person name="Goetker S."/>
            <person name="Weisshaar B."/>
            <person name="Goesmann A."/>
            <person name="Droege M."/>
            <person name="Puehler A."/>
        </authorList>
    </citation>
    <scope>NUCLEOTIDE SEQUENCE [LARGE SCALE GENOMIC DNA]</scope>
    <source>
        <strain>DSM 44385 / JCM 11950 / CIP 105744 / CCUG 35717</strain>
    </source>
</reference>
<protein>
    <recommendedName>
        <fullName evidence="1">Elongation factor Ts</fullName>
        <shortName evidence="1">EF-Ts</shortName>
    </recommendedName>
</protein>
<keyword id="KW-0963">Cytoplasm</keyword>
<keyword id="KW-0251">Elongation factor</keyword>
<keyword id="KW-0648">Protein biosynthesis</keyword>
<keyword id="KW-1185">Reference proteome</keyword>
<evidence type="ECO:0000255" key="1">
    <source>
        <dbReference type="HAMAP-Rule" id="MF_00050"/>
    </source>
</evidence>
<sequence>MANYTAADVKKLREITGAGMMSCKKALEEADGDFDKAVEFLRIKGAKDVGKRAERTAAEGLIAVSGNTMIEVNSETDFVAKNAEFKEFADKVAKAADEAKANSAEDLAAVNVDGTPAEEALQAFSAKIGEKLALRRATTIDGDNVAVYLHHRSADLPPAVGVMVAYEGEGDAAKEAAHNAAMQVAALKAKYLKREDVPSDIVEKERSIAEATSREEGKPEKALPKIVEGRLNGFFKDVVLLEQPSVADHKKTVKQLMDEAGVTLTGFRRYEVGQQ</sequence>
<dbReference type="EMBL" id="CP001620">
    <property type="protein sequence ID" value="ACR17913.1"/>
    <property type="molecule type" value="Genomic_DNA"/>
</dbReference>
<dbReference type="RefSeq" id="WP_012731800.1">
    <property type="nucleotide sequence ID" value="NC_012704.1"/>
</dbReference>
<dbReference type="SMR" id="C4LJA8"/>
<dbReference type="STRING" id="645127.ckrop_1168"/>
<dbReference type="KEGG" id="ckp:ckrop_1168"/>
<dbReference type="eggNOG" id="COG0264">
    <property type="taxonomic scope" value="Bacteria"/>
</dbReference>
<dbReference type="HOGENOM" id="CLU_047155_0_0_11"/>
<dbReference type="OrthoDB" id="9808348at2"/>
<dbReference type="Proteomes" id="UP000001473">
    <property type="component" value="Chromosome"/>
</dbReference>
<dbReference type="GO" id="GO:0005737">
    <property type="term" value="C:cytoplasm"/>
    <property type="evidence" value="ECO:0007669"/>
    <property type="project" value="UniProtKB-SubCell"/>
</dbReference>
<dbReference type="GO" id="GO:0003746">
    <property type="term" value="F:translation elongation factor activity"/>
    <property type="evidence" value="ECO:0007669"/>
    <property type="project" value="UniProtKB-UniRule"/>
</dbReference>
<dbReference type="CDD" id="cd14275">
    <property type="entry name" value="UBA_EF-Ts"/>
    <property type="match status" value="1"/>
</dbReference>
<dbReference type="FunFam" id="1.10.286.20:FF:000001">
    <property type="entry name" value="Elongation factor Ts"/>
    <property type="match status" value="1"/>
</dbReference>
<dbReference type="FunFam" id="1.10.8.10:FF:000001">
    <property type="entry name" value="Elongation factor Ts"/>
    <property type="match status" value="1"/>
</dbReference>
<dbReference type="Gene3D" id="1.10.286.20">
    <property type="match status" value="1"/>
</dbReference>
<dbReference type="Gene3D" id="1.10.8.10">
    <property type="entry name" value="DNA helicase RuvA subunit, C-terminal domain"/>
    <property type="match status" value="1"/>
</dbReference>
<dbReference type="Gene3D" id="3.30.479.20">
    <property type="entry name" value="Elongation factor Ts, dimerisation domain"/>
    <property type="match status" value="2"/>
</dbReference>
<dbReference type="HAMAP" id="MF_00050">
    <property type="entry name" value="EF_Ts"/>
    <property type="match status" value="1"/>
</dbReference>
<dbReference type="InterPro" id="IPR036402">
    <property type="entry name" value="EF-Ts_dimer_sf"/>
</dbReference>
<dbReference type="InterPro" id="IPR001816">
    <property type="entry name" value="Transl_elong_EFTs/EF1B"/>
</dbReference>
<dbReference type="InterPro" id="IPR014039">
    <property type="entry name" value="Transl_elong_EFTs/EF1B_dimer"/>
</dbReference>
<dbReference type="InterPro" id="IPR018101">
    <property type="entry name" value="Transl_elong_Ts_CS"/>
</dbReference>
<dbReference type="InterPro" id="IPR009060">
    <property type="entry name" value="UBA-like_sf"/>
</dbReference>
<dbReference type="NCBIfam" id="TIGR00116">
    <property type="entry name" value="tsf"/>
    <property type="match status" value="1"/>
</dbReference>
<dbReference type="PANTHER" id="PTHR11741">
    <property type="entry name" value="ELONGATION FACTOR TS"/>
    <property type="match status" value="1"/>
</dbReference>
<dbReference type="PANTHER" id="PTHR11741:SF0">
    <property type="entry name" value="ELONGATION FACTOR TS, MITOCHONDRIAL"/>
    <property type="match status" value="1"/>
</dbReference>
<dbReference type="Pfam" id="PF00889">
    <property type="entry name" value="EF_TS"/>
    <property type="match status" value="1"/>
</dbReference>
<dbReference type="SUPFAM" id="SSF54713">
    <property type="entry name" value="Elongation factor Ts (EF-Ts), dimerisation domain"/>
    <property type="match status" value="1"/>
</dbReference>
<dbReference type="SUPFAM" id="SSF46934">
    <property type="entry name" value="UBA-like"/>
    <property type="match status" value="1"/>
</dbReference>
<dbReference type="PROSITE" id="PS01127">
    <property type="entry name" value="EF_TS_2"/>
    <property type="match status" value="1"/>
</dbReference>
<accession>C4LJA8</accession>